<feature type="chain" id="PRO_1000115343" description="Chorismate synthase">
    <location>
        <begin position="1"/>
        <end position="392"/>
    </location>
</feature>
<feature type="binding site" evidence="1">
    <location>
        <position position="40"/>
    </location>
    <ligand>
        <name>NADP(+)</name>
        <dbReference type="ChEBI" id="CHEBI:58349"/>
    </ligand>
</feature>
<feature type="binding site" evidence="1">
    <location>
        <position position="46"/>
    </location>
    <ligand>
        <name>NADP(+)</name>
        <dbReference type="ChEBI" id="CHEBI:58349"/>
    </ligand>
</feature>
<feature type="binding site" evidence="1">
    <location>
        <begin position="129"/>
        <end position="131"/>
    </location>
    <ligand>
        <name>FMN</name>
        <dbReference type="ChEBI" id="CHEBI:58210"/>
    </ligand>
</feature>
<feature type="binding site" evidence="1">
    <location>
        <begin position="257"/>
        <end position="258"/>
    </location>
    <ligand>
        <name>FMN</name>
        <dbReference type="ChEBI" id="CHEBI:58210"/>
    </ligand>
</feature>
<feature type="binding site" evidence="1">
    <location>
        <position position="302"/>
    </location>
    <ligand>
        <name>FMN</name>
        <dbReference type="ChEBI" id="CHEBI:58210"/>
    </ligand>
</feature>
<feature type="binding site" evidence="1">
    <location>
        <begin position="317"/>
        <end position="321"/>
    </location>
    <ligand>
        <name>FMN</name>
        <dbReference type="ChEBI" id="CHEBI:58210"/>
    </ligand>
</feature>
<feature type="binding site" evidence="1">
    <location>
        <position position="343"/>
    </location>
    <ligand>
        <name>FMN</name>
        <dbReference type="ChEBI" id="CHEBI:58210"/>
    </ligand>
</feature>
<reference key="1">
    <citation type="submission" date="2008-06" db="EMBL/GenBank/DDBJ databases">
        <title>Complete sequence of Chloroherpeton thalassium ATCC 35110.</title>
        <authorList>
            <consortium name="US DOE Joint Genome Institute"/>
            <person name="Lucas S."/>
            <person name="Copeland A."/>
            <person name="Lapidus A."/>
            <person name="Glavina del Rio T."/>
            <person name="Dalin E."/>
            <person name="Tice H."/>
            <person name="Bruce D."/>
            <person name="Goodwin L."/>
            <person name="Pitluck S."/>
            <person name="Schmutz J."/>
            <person name="Larimer F."/>
            <person name="Land M."/>
            <person name="Hauser L."/>
            <person name="Kyrpides N."/>
            <person name="Mikhailova N."/>
            <person name="Liu Z."/>
            <person name="Li T."/>
            <person name="Zhao F."/>
            <person name="Overmann J."/>
            <person name="Bryant D.A."/>
            <person name="Richardson P."/>
        </authorList>
    </citation>
    <scope>NUCLEOTIDE SEQUENCE [LARGE SCALE GENOMIC DNA]</scope>
    <source>
        <strain>ATCC 35110 / GB-78</strain>
    </source>
</reference>
<name>AROC_CHLT3</name>
<comment type="function">
    <text evidence="1">Catalyzes the anti-1,4-elimination of the C-3 phosphate and the C-6 proR hydrogen from 5-enolpyruvylshikimate-3-phosphate (EPSP) to yield chorismate, which is the branch point compound that serves as the starting substrate for the three terminal pathways of aromatic amino acid biosynthesis. This reaction introduces a second double bond into the aromatic ring system.</text>
</comment>
<comment type="catalytic activity">
    <reaction evidence="1">
        <text>5-O-(1-carboxyvinyl)-3-phosphoshikimate = chorismate + phosphate</text>
        <dbReference type="Rhea" id="RHEA:21020"/>
        <dbReference type="ChEBI" id="CHEBI:29748"/>
        <dbReference type="ChEBI" id="CHEBI:43474"/>
        <dbReference type="ChEBI" id="CHEBI:57701"/>
        <dbReference type="EC" id="4.2.3.5"/>
    </reaction>
</comment>
<comment type="cofactor">
    <cofactor evidence="1">
        <name>FMNH2</name>
        <dbReference type="ChEBI" id="CHEBI:57618"/>
    </cofactor>
    <text evidence="1">Reduced FMN (FMNH(2)).</text>
</comment>
<comment type="pathway">
    <text evidence="1">Metabolic intermediate biosynthesis; chorismate biosynthesis; chorismate from D-erythrose 4-phosphate and phosphoenolpyruvate: step 7/7.</text>
</comment>
<comment type="subunit">
    <text evidence="1">Homotetramer.</text>
</comment>
<comment type="similarity">
    <text evidence="1">Belongs to the chorismate synthase family.</text>
</comment>
<evidence type="ECO:0000255" key="1">
    <source>
        <dbReference type="HAMAP-Rule" id="MF_00300"/>
    </source>
</evidence>
<dbReference type="EC" id="4.2.3.5" evidence="1"/>
<dbReference type="EMBL" id="CP001100">
    <property type="protein sequence ID" value="ACF14750.1"/>
    <property type="molecule type" value="Genomic_DNA"/>
</dbReference>
<dbReference type="RefSeq" id="WP_012500832.1">
    <property type="nucleotide sequence ID" value="NC_011026.1"/>
</dbReference>
<dbReference type="SMR" id="B3QWJ0"/>
<dbReference type="STRING" id="517418.Ctha_2299"/>
<dbReference type="KEGG" id="cts:Ctha_2299"/>
<dbReference type="eggNOG" id="COG0082">
    <property type="taxonomic scope" value="Bacteria"/>
</dbReference>
<dbReference type="HOGENOM" id="CLU_034547_2_0_10"/>
<dbReference type="OrthoDB" id="9771806at2"/>
<dbReference type="UniPathway" id="UPA00053">
    <property type="reaction ID" value="UER00090"/>
</dbReference>
<dbReference type="Proteomes" id="UP000001208">
    <property type="component" value="Chromosome"/>
</dbReference>
<dbReference type="GO" id="GO:0005829">
    <property type="term" value="C:cytosol"/>
    <property type="evidence" value="ECO:0007669"/>
    <property type="project" value="TreeGrafter"/>
</dbReference>
<dbReference type="GO" id="GO:0004107">
    <property type="term" value="F:chorismate synthase activity"/>
    <property type="evidence" value="ECO:0007669"/>
    <property type="project" value="UniProtKB-UniRule"/>
</dbReference>
<dbReference type="GO" id="GO:0010181">
    <property type="term" value="F:FMN binding"/>
    <property type="evidence" value="ECO:0007669"/>
    <property type="project" value="TreeGrafter"/>
</dbReference>
<dbReference type="GO" id="GO:0008652">
    <property type="term" value="P:amino acid biosynthetic process"/>
    <property type="evidence" value="ECO:0007669"/>
    <property type="project" value="UniProtKB-KW"/>
</dbReference>
<dbReference type="GO" id="GO:0009073">
    <property type="term" value="P:aromatic amino acid family biosynthetic process"/>
    <property type="evidence" value="ECO:0007669"/>
    <property type="project" value="UniProtKB-KW"/>
</dbReference>
<dbReference type="GO" id="GO:0009423">
    <property type="term" value="P:chorismate biosynthetic process"/>
    <property type="evidence" value="ECO:0007669"/>
    <property type="project" value="UniProtKB-UniRule"/>
</dbReference>
<dbReference type="CDD" id="cd07304">
    <property type="entry name" value="Chorismate_synthase"/>
    <property type="match status" value="1"/>
</dbReference>
<dbReference type="FunFam" id="3.60.150.10:FF:000002">
    <property type="entry name" value="Chorismate synthase"/>
    <property type="match status" value="1"/>
</dbReference>
<dbReference type="Gene3D" id="3.60.150.10">
    <property type="entry name" value="Chorismate synthase AroC"/>
    <property type="match status" value="1"/>
</dbReference>
<dbReference type="HAMAP" id="MF_00300">
    <property type="entry name" value="Chorismate_synth"/>
    <property type="match status" value="1"/>
</dbReference>
<dbReference type="InterPro" id="IPR000453">
    <property type="entry name" value="Chorismate_synth"/>
</dbReference>
<dbReference type="InterPro" id="IPR035904">
    <property type="entry name" value="Chorismate_synth_AroC_sf"/>
</dbReference>
<dbReference type="InterPro" id="IPR020541">
    <property type="entry name" value="Chorismate_synthase_CS"/>
</dbReference>
<dbReference type="NCBIfam" id="TIGR00033">
    <property type="entry name" value="aroC"/>
    <property type="match status" value="1"/>
</dbReference>
<dbReference type="NCBIfam" id="NF003793">
    <property type="entry name" value="PRK05382.1"/>
    <property type="match status" value="1"/>
</dbReference>
<dbReference type="PANTHER" id="PTHR21085">
    <property type="entry name" value="CHORISMATE SYNTHASE"/>
    <property type="match status" value="1"/>
</dbReference>
<dbReference type="PANTHER" id="PTHR21085:SF0">
    <property type="entry name" value="CHORISMATE SYNTHASE"/>
    <property type="match status" value="1"/>
</dbReference>
<dbReference type="Pfam" id="PF01264">
    <property type="entry name" value="Chorismate_synt"/>
    <property type="match status" value="1"/>
</dbReference>
<dbReference type="PIRSF" id="PIRSF001456">
    <property type="entry name" value="Chorismate_synth"/>
    <property type="match status" value="1"/>
</dbReference>
<dbReference type="SUPFAM" id="SSF103263">
    <property type="entry name" value="Chorismate synthase, AroC"/>
    <property type="match status" value="1"/>
</dbReference>
<dbReference type="PROSITE" id="PS00787">
    <property type="entry name" value="CHORISMATE_SYNTHASE_1"/>
    <property type="match status" value="1"/>
</dbReference>
<proteinExistence type="inferred from homology"/>
<gene>
    <name evidence="1" type="primary">aroC</name>
    <name type="ordered locus">Ctha_2299</name>
</gene>
<organism>
    <name type="scientific">Chloroherpeton thalassium (strain ATCC 35110 / GB-78)</name>
    <dbReference type="NCBI Taxonomy" id="517418"/>
    <lineage>
        <taxon>Bacteria</taxon>
        <taxon>Pseudomonadati</taxon>
        <taxon>Chlorobiota</taxon>
        <taxon>Chlorobiia</taxon>
        <taxon>Chlorobiales</taxon>
        <taxon>Chloroherpetonaceae</taxon>
        <taxon>Chloroherpeton</taxon>
    </lineage>
</organism>
<accession>B3QWJ0</accession>
<keyword id="KW-0028">Amino-acid biosynthesis</keyword>
<keyword id="KW-0057">Aromatic amino acid biosynthesis</keyword>
<keyword id="KW-0274">FAD</keyword>
<keyword id="KW-0285">Flavoprotein</keyword>
<keyword id="KW-0288">FMN</keyword>
<keyword id="KW-0456">Lyase</keyword>
<keyword id="KW-0521">NADP</keyword>
<keyword id="KW-1185">Reference proteome</keyword>
<protein>
    <recommendedName>
        <fullName evidence="1">Chorismate synthase</fullName>
        <shortName evidence="1">CS</shortName>
        <ecNumber evidence="1">4.2.3.5</ecNumber>
    </recommendedName>
    <alternativeName>
        <fullName evidence="1">5-enolpyruvylshikimate-3-phosphate phospholyase</fullName>
    </alternativeName>
</protein>
<sequence>MIRYLTSGESHGPSLVAIVEGVPAGLALHPDDLNIHLQRRQQGYGRGNRMKIESDKAEILSGVRFGYTIGSPISFAIKNKDWANWTNKMNQFENPSEPVATIDIPRPGHADFSGRIKYGFNDIRPVIERSSARETAARVGACSISRKFLHDLGIEIGSYVSAIGQAFETEPNHHAVKILEKGAETLMHEADESPVRMLNKDLEKQAMELIDTAKKAGDTLGGIVEVFVTGLPIGLGSYVQYDRRLGADLGAAILSIQAVKGFEIGHAFKNAVSFGSEVHDEFYLDKNGNPQRKTNRAGGLEGGMTNGETLHLRVAMKPIATLMSPLSSFDFKTMSPAASHIERSDTCAVPACGVIAESVIAPVLANAILEKFGGDTINETKLRLDNYTQKGK</sequence>